<evidence type="ECO:0000250" key="1"/>
<evidence type="ECO:0000255" key="2"/>
<evidence type="ECO:0000269" key="3">
    <source>
    </source>
</evidence>
<evidence type="ECO:0000305" key="4"/>
<evidence type="ECO:0000305" key="5">
    <source>
    </source>
</evidence>
<sequence length="725" mass="79868">MRALSLASLIGIASAACPYMTGELERRDTGTDDATAATEEFLSQYYMADNDTFLTSDVGGPIEDQNSLQVGDRGPTLLEDFIFRQKIQRFDHERVPERAVHARGVGAHGVFTSYGDYSNITAASFLGAEGKETPVFVRFSTVAGSRGSSDLARDVHGFATRFYTDEGNFDIVGNNIPVFFIQDAILFPDLIHAVKPRGDNEIPQAATAHDSAWDFFSQQPSSLHTLLWAMSGHGIPRSLRHVDGFGIHTFRFVTDNGDSKLVKFHWKSLQGKASMVWEEAQQVSGKNPDFMRQDLFEAIEAGRYPEWELGVQIMDEEDQLKFGFDLFDPTKIVPEEYVPITKLGKMTLNRNPRNYFAETEQVMFQPGHIVRGVDFTEDPLLQGRLFSYLDTQLNRHGGPNFEQLPINQPRVPVHNNNRDGAGQMFIPLNPNAYSPNTLNKGSPKQANQTVGKGFFTAPGRESTGRFTRAVSPSFEDVWSQPRLFYNSLTPAEQQFVVDAIRFENSNVKSSVVRNNVIIQLNRVSNDLARRVARAIGVEEPEADPTYYHNNKTTDVGTFGQKLKKLDGLKVGFLASVETPASIEAASELSKQLSEDGVDVVVVAERLSDGVDQTYSGSDAIQFDAVIVAPGAEGLFSTFSFTAPSNATSSSTLFPAGRPLQIVIDGFRFGKPVGAVGSAATALKNAGIQTSRDGVYVDKSVTSGFVDGIKDGLRTFKFLDRFKLDH</sequence>
<reference key="1">
    <citation type="journal article" date="2005" name="J. Biosci. Bioeng.">
        <title>Cloning and expression analysis of two catalase genes from Aspergillus oryzae.</title>
        <authorList>
            <person name="Hisada H."/>
            <person name="Hata Y."/>
            <person name="Kawato A."/>
            <person name="Abe Y."/>
            <person name="Akita O."/>
        </authorList>
    </citation>
    <scope>NUCLEOTIDE SEQUENCE [GENOMIC DNA]</scope>
    <scope>FUNCTION</scope>
    <scope>CATALYTIC ACTIVITY</scope>
    <scope>INDUCTION</scope>
</reference>
<reference key="2">
    <citation type="journal article" date="2005" name="Nature">
        <title>Genome sequencing and analysis of Aspergillus oryzae.</title>
        <authorList>
            <person name="Machida M."/>
            <person name="Asai K."/>
            <person name="Sano M."/>
            <person name="Tanaka T."/>
            <person name="Kumagai T."/>
            <person name="Terai G."/>
            <person name="Kusumoto K."/>
            <person name="Arima T."/>
            <person name="Akita O."/>
            <person name="Kashiwagi Y."/>
            <person name="Abe K."/>
            <person name="Gomi K."/>
            <person name="Horiuchi H."/>
            <person name="Kitamoto K."/>
            <person name="Kobayashi T."/>
            <person name="Takeuchi M."/>
            <person name="Denning D.W."/>
            <person name="Galagan J.E."/>
            <person name="Nierman W.C."/>
            <person name="Yu J."/>
            <person name="Archer D.B."/>
            <person name="Bennett J.W."/>
            <person name="Bhatnagar D."/>
            <person name="Cleveland T.E."/>
            <person name="Fedorova N.D."/>
            <person name="Gotoh O."/>
            <person name="Horikawa H."/>
            <person name="Hosoyama A."/>
            <person name="Ichinomiya M."/>
            <person name="Igarashi R."/>
            <person name="Iwashita K."/>
            <person name="Juvvadi P.R."/>
            <person name="Kato M."/>
            <person name="Kato Y."/>
            <person name="Kin T."/>
            <person name="Kokubun A."/>
            <person name="Maeda H."/>
            <person name="Maeyama N."/>
            <person name="Maruyama J."/>
            <person name="Nagasaki H."/>
            <person name="Nakajima T."/>
            <person name="Oda K."/>
            <person name="Okada K."/>
            <person name="Paulsen I."/>
            <person name="Sakamoto K."/>
            <person name="Sawano T."/>
            <person name="Takahashi M."/>
            <person name="Takase K."/>
            <person name="Terabayashi Y."/>
            <person name="Wortman J.R."/>
            <person name="Yamada O."/>
            <person name="Yamagata Y."/>
            <person name="Anazawa H."/>
            <person name="Hata Y."/>
            <person name="Koide Y."/>
            <person name="Komori T."/>
            <person name="Koyama Y."/>
            <person name="Minetoki T."/>
            <person name="Suharnan S."/>
            <person name="Tanaka A."/>
            <person name="Isono K."/>
            <person name="Kuhara S."/>
            <person name="Ogasawara N."/>
            <person name="Kikuchi H."/>
        </authorList>
    </citation>
    <scope>NUCLEOTIDE SEQUENCE [LARGE SCALE GENOMIC DNA]</scope>
    <source>
        <strain>ATCC 42149 / RIB 40</strain>
    </source>
</reference>
<comment type="function">
    <text evidence="5">Occurs in almost all aerobically respiring organisms and serves to protect cells from the toxic effects of hydrogen peroxide through its degradation into water and oxygen.</text>
</comment>
<comment type="catalytic activity">
    <reaction evidence="3">
        <text>2 H2O2 = O2 + 2 H2O</text>
        <dbReference type="Rhea" id="RHEA:20309"/>
        <dbReference type="ChEBI" id="CHEBI:15377"/>
        <dbReference type="ChEBI" id="CHEBI:15379"/>
        <dbReference type="ChEBI" id="CHEBI:16240"/>
        <dbReference type="EC" id="1.11.1.6"/>
    </reaction>
    <physiologicalReaction direction="left-to-right" evidence="5">
        <dbReference type="Rhea" id="RHEA:20310"/>
    </physiologicalReaction>
</comment>
<comment type="cofactor">
    <cofactor>
        <name>heme</name>
        <dbReference type="ChEBI" id="CHEBI:30413"/>
    </cofactor>
</comment>
<comment type="subunit">
    <text evidence="1">Homotetramer.</text>
</comment>
<comment type="subcellular location">
    <subcellularLocation>
        <location evidence="1">Secreted</location>
    </subcellularLocation>
</comment>
<comment type="induction">
    <text evidence="3">By hydrogen peroxide.</text>
</comment>
<comment type="similarity">
    <text evidence="4">Belongs to the catalase family.</text>
</comment>
<feature type="signal peptide" evidence="2">
    <location>
        <begin position="1"/>
        <end position="15"/>
    </location>
</feature>
<feature type="propeptide" id="PRO_0000043339" evidence="1">
    <location>
        <begin position="16"/>
        <end position="27"/>
    </location>
</feature>
<feature type="chain" id="PRO_0000043340" description="Catalase B">
    <location>
        <begin position="28"/>
        <end position="725"/>
    </location>
</feature>
<feature type="active site" evidence="1">
    <location>
        <position position="101"/>
    </location>
</feature>
<feature type="active site" evidence="1">
    <location>
        <position position="174"/>
    </location>
</feature>
<feature type="binding site" description="axial binding residue" evidence="1">
    <location>
        <position position="388"/>
    </location>
    <ligand>
        <name>heme</name>
        <dbReference type="ChEBI" id="CHEBI:30413"/>
    </ligand>
    <ligandPart>
        <name>Fe</name>
        <dbReference type="ChEBI" id="CHEBI:18248"/>
    </ligandPart>
</feature>
<feature type="glycosylation site" description="N-linked (GlcNAc...) asparagine" evidence="2">
    <location>
        <position position="50"/>
    </location>
</feature>
<feature type="glycosylation site" description="N-linked (GlcNAc...) asparagine" evidence="2">
    <location>
        <position position="119"/>
    </location>
</feature>
<feature type="glycosylation site" description="N-linked (GlcNAc...) asparagine" evidence="2">
    <location>
        <position position="447"/>
    </location>
</feature>
<feature type="glycosylation site" description="N-linked (GlcNAc...) asparagine" evidence="2">
    <location>
        <position position="550"/>
    </location>
</feature>
<feature type="glycosylation site" description="N-linked (GlcNAc...) asparagine" evidence="2">
    <location>
        <position position="645"/>
    </location>
</feature>
<dbReference type="EC" id="1.11.1.6" evidence="3"/>
<dbReference type="EMBL" id="AB078864">
    <property type="protein sequence ID" value="BAC55897.1"/>
    <property type="molecule type" value="Genomic_DNA"/>
</dbReference>
<dbReference type="EMBL" id="BA000053">
    <property type="protein sequence ID" value="BAE62700.1"/>
    <property type="molecule type" value="Genomic_DNA"/>
</dbReference>
<dbReference type="RefSeq" id="XP_001823833.1">
    <property type="nucleotide sequence ID" value="XM_001823781.2"/>
</dbReference>
<dbReference type="SMR" id="Q877A8"/>
<dbReference type="STRING" id="510516.Q877A8"/>
<dbReference type="GlyCosmos" id="Q877A8">
    <property type="glycosylation" value="5 sites, No reported glycans"/>
</dbReference>
<dbReference type="EnsemblFungi" id="BAE62700">
    <property type="protein sequence ID" value="BAE62700"/>
    <property type="gene ID" value="AO090120000068"/>
</dbReference>
<dbReference type="GeneID" id="5996092"/>
<dbReference type="KEGG" id="aor:AO090120000068"/>
<dbReference type="VEuPathDB" id="FungiDB:AO090120000068"/>
<dbReference type="HOGENOM" id="CLU_010645_3_0_1"/>
<dbReference type="OMA" id="YGDWSNI"/>
<dbReference type="OrthoDB" id="38853at5052"/>
<dbReference type="Proteomes" id="UP000006564">
    <property type="component" value="Chromosome 5"/>
</dbReference>
<dbReference type="GO" id="GO:0005829">
    <property type="term" value="C:cytosol"/>
    <property type="evidence" value="ECO:0007669"/>
    <property type="project" value="TreeGrafter"/>
</dbReference>
<dbReference type="GO" id="GO:0005576">
    <property type="term" value="C:extracellular region"/>
    <property type="evidence" value="ECO:0000314"/>
    <property type="project" value="AspGD"/>
</dbReference>
<dbReference type="GO" id="GO:0004096">
    <property type="term" value="F:catalase activity"/>
    <property type="evidence" value="ECO:0000315"/>
    <property type="project" value="AspGD"/>
</dbReference>
<dbReference type="GO" id="GO:0020037">
    <property type="term" value="F:heme binding"/>
    <property type="evidence" value="ECO:0007669"/>
    <property type="project" value="InterPro"/>
</dbReference>
<dbReference type="GO" id="GO:0046872">
    <property type="term" value="F:metal ion binding"/>
    <property type="evidence" value="ECO:0007669"/>
    <property type="project" value="UniProtKB-KW"/>
</dbReference>
<dbReference type="GO" id="GO:0070301">
    <property type="term" value="P:cellular response to hydrogen peroxide"/>
    <property type="evidence" value="ECO:0000315"/>
    <property type="project" value="AspGD"/>
</dbReference>
<dbReference type="GO" id="GO:0042744">
    <property type="term" value="P:hydrogen peroxide catabolic process"/>
    <property type="evidence" value="ECO:0007669"/>
    <property type="project" value="UniProtKB-KW"/>
</dbReference>
<dbReference type="CDD" id="cd03132">
    <property type="entry name" value="GATase1_catalase"/>
    <property type="match status" value="1"/>
</dbReference>
<dbReference type="FunFam" id="2.40.180.10:FF:000003">
    <property type="entry name" value="Catalase"/>
    <property type="match status" value="1"/>
</dbReference>
<dbReference type="FunFam" id="3.40.50.880:FF:000043">
    <property type="entry name" value="Catalase"/>
    <property type="match status" value="1"/>
</dbReference>
<dbReference type="FunFam" id="1.20.1370.20:FF:000001">
    <property type="entry name" value="Catalase HPII"/>
    <property type="match status" value="1"/>
</dbReference>
<dbReference type="Gene3D" id="1.20.1370.20">
    <property type="match status" value="1"/>
</dbReference>
<dbReference type="Gene3D" id="3.40.50.880">
    <property type="match status" value="1"/>
</dbReference>
<dbReference type="Gene3D" id="2.40.180.10">
    <property type="entry name" value="Catalase core domain"/>
    <property type="match status" value="1"/>
</dbReference>
<dbReference type="InterPro" id="IPR018028">
    <property type="entry name" value="Catalase"/>
</dbReference>
<dbReference type="InterPro" id="IPR024712">
    <property type="entry name" value="Catalase_clade2"/>
</dbReference>
<dbReference type="InterPro" id="IPR043156">
    <property type="entry name" value="Catalase_clade2_helical"/>
</dbReference>
<dbReference type="InterPro" id="IPR011614">
    <property type="entry name" value="Catalase_core"/>
</dbReference>
<dbReference type="InterPro" id="IPR002226">
    <property type="entry name" value="Catalase_haem_BS"/>
</dbReference>
<dbReference type="InterPro" id="IPR010582">
    <property type="entry name" value="Catalase_immune_responsive"/>
</dbReference>
<dbReference type="InterPro" id="IPR041399">
    <property type="entry name" value="Catalase_large_C"/>
</dbReference>
<dbReference type="InterPro" id="IPR020835">
    <property type="entry name" value="Catalase_sf"/>
</dbReference>
<dbReference type="InterPro" id="IPR029062">
    <property type="entry name" value="Class_I_gatase-like"/>
</dbReference>
<dbReference type="PANTHER" id="PTHR42821">
    <property type="entry name" value="CATALASE"/>
    <property type="match status" value="1"/>
</dbReference>
<dbReference type="PANTHER" id="PTHR42821:SF3">
    <property type="entry name" value="CATALASE B"/>
    <property type="match status" value="1"/>
</dbReference>
<dbReference type="Pfam" id="PF00199">
    <property type="entry name" value="Catalase"/>
    <property type="match status" value="1"/>
</dbReference>
<dbReference type="Pfam" id="PF06628">
    <property type="entry name" value="Catalase-rel"/>
    <property type="match status" value="1"/>
</dbReference>
<dbReference type="Pfam" id="PF18011">
    <property type="entry name" value="Catalase_C"/>
    <property type="match status" value="1"/>
</dbReference>
<dbReference type="PIRSF" id="PIRSF038927">
    <property type="entry name" value="Catalase_clade2"/>
    <property type="match status" value="1"/>
</dbReference>
<dbReference type="PRINTS" id="PR00067">
    <property type="entry name" value="CATALASE"/>
</dbReference>
<dbReference type="SMART" id="SM01060">
    <property type="entry name" value="Catalase"/>
    <property type="match status" value="1"/>
</dbReference>
<dbReference type="SUPFAM" id="SSF52317">
    <property type="entry name" value="Class I glutamine amidotransferase-like"/>
    <property type="match status" value="1"/>
</dbReference>
<dbReference type="SUPFAM" id="SSF56634">
    <property type="entry name" value="Heme-dependent catalase-like"/>
    <property type="match status" value="1"/>
</dbReference>
<dbReference type="PROSITE" id="PS00437">
    <property type="entry name" value="CATALASE_1"/>
    <property type="match status" value="1"/>
</dbReference>
<dbReference type="PROSITE" id="PS51402">
    <property type="entry name" value="CATALASE_3"/>
    <property type="match status" value="1"/>
</dbReference>
<organism>
    <name type="scientific">Aspergillus oryzae (strain ATCC 42149 / RIB 40)</name>
    <name type="common">Yellow koji mold</name>
    <dbReference type="NCBI Taxonomy" id="510516"/>
    <lineage>
        <taxon>Eukaryota</taxon>
        <taxon>Fungi</taxon>
        <taxon>Dikarya</taxon>
        <taxon>Ascomycota</taxon>
        <taxon>Pezizomycotina</taxon>
        <taxon>Eurotiomycetes</taxon>
        <taxon>Eurotiomycetidae</taxon>
        <taxon>Eurotiales</taxon>
        <taxon>Aspergillaceae</taxon>
        <taxon>Aspergillus</taxon>
        <taxon>Aspergillus subgen. Circumdati</taxon>
    </lineage>
</organism>
<keyword id="KW-0165">Cleavage on pair of basic residues</keyword>
<keyword id="KW-0325">Glycoprotein</keyword>
<keyword id="KW-0349">Heme</keyword>
<keyword id="KW-0376">Hydrogen peroxide</keyword>
<keyword id="KW-0408">Iron</keyword>
<keyword id="KW-0479">Metal-binding</keyword>
<keyword id="KW-0560">Oxidoreductase</keyword>
<keyword id="KW-0575">Peroxidase</keyword>
<keyword id="KW-1185">Reference proteome</keyword>
<keyword id="KW-0964">Secreted</keyword>
<keyword id="KW-0732">Signal</keyword>
<keyword id="KW-0865">Zymogen</keyword>
<proteinExistence type="evidence at protein level"/>
<name>CATB_ASPOR</name>
<accession>Q877A8</accession>
<accession>Q2U6W5</accession>
<protein>
    <recommendedName>
        <fullName>Catalase B</fullName>
        <ecNumber evidence="3">1.11.1.6</ecNumber>
    </recommendedName>
</protein>
<gene>
    <name type="primary">catB</name>
    <name type="ORF">AO090120000068</name>
</gene>